<protein>
    <recommendedName>
        <fullName evidence="1">Glucose-1-phosphate adenylyltransferase</fullName>
        <ecNumber evidence="1">2.7.7.27</ecNumber>
    </recommendedName>
    <alternativeName>
        <fullName evidence="1">ADP-glucose pyrophosphorylase</fullName>
        <shortName evidence="1">ADPGlc PPase</shortName>
    </alternativeName>
    <alternativeName>
        <fullName evidence="1">ADP-glucose synthase</fullName>
    </alternativeName>
</protein>
<accession>Q6NCT8</accession>
<reference key="1">
    <citation type="journal article" date="2004" name="Nat. Biotechnol.">
        <title>Complete genome sequence of the metabolically versatile photosynthetic bacterium Rhodopseudomonas palustris.</title>
        <authorList>
            <person name="Larimer F.W."/>
            <person name="Chain P."/>
            <person name="Hauser L."/>
            <person name="Lamerdin J.E."/>
            <person name="Malfatti S."/>
            <person name="Do L."/>
            <person name="Land M.L."/>
            <person name="Pelletier D.A."/>
            <person name="Beatty J.T."/>
            <person name="Lang A.S."/>
            <person name="Tabita F.R."/>
            <person name="Gibson J.L."/>
            <person name="Hanson T.E."/>
            <person name="Bobst C."/>
            <person name="Torres y Torres J.L."/>
            <person name="Peres C."/>
            <person name="Harrison F.H."/>
            <person name="Gibson J."/>
            <person name="Harwood C.S."/>
        </authorList>
    </citation>
    <scope>NUCLEOTIDE SEQUENCE [LARGE SCALE GENOMIC DNA]</scope>
    <source>
        <strain>ATCC BAA-98 / CGA009</strain>
    </source>
</reference>
<gene>
    <name evidence="1" type="primary">glgC</name>
    <name type="ordered locus">RPA0381</name>
</gene>
<name>GLGC_RHOPA</name>
<keyword id="KW-0067">ATP-binding</keyword>
<keyword id="KW-0119">Carbohydrate metabolism</keyword>
<keyword id="KW-0320">Glycogen biosynthesis</keyword>
<keyword id="KW-0321">Glycogen metabolism</keyword>
<keyword id="KW-0547">Nucleotide-binding</keyword>
<keyword id="KW-0548">Nucleotidyltransferase</keyword>
<keyword id="KW-0808">Transferase</keyword>
<organism>
    <name type="scientific">Rhodopseudomonas palustris (strain ATCC BAA-98 / CGA009)</name>
    <dbReference type="NCBI Taxonomy" id="258594"/>
    <lineage>
        <taxon>Bacteria</taxon>
        <taxon>Pseudomonadati</taxon>
        <taxon>Pseudomonadota</taxon>
        <taxon>Alphaproteobacteria</taxon>
        <taxon>Hyphomicrobiales</taxon>
        <taxon>Nitrobacteraceae</taxon>
        <taxon>Rhodopseudomonas</taxon>
    </lineage>
</organism>
<comment type="function">
    <text evidence="1">Involved in the biosynthesis of ADP-glucose, a building block required for the elongation reactions to produce glycogen. Catalyzes the reaction between ATP and alpha-D-glucose 1-phosphate (G1P) to produce pyrophosphate and ADP-Glc.</text>
</comment>
<comment type="catalytic activity">
    <reaction evidence="1">
        <text>alpha-D-glucose 1-phosphate + ATP + H(+) = ADP-alpha-D-glucose + diphosphate</text>
        <dbReference type="Rhea" id="RHEA:12120"/>
        <dbReference type="ChEBI" id="CHEBI:15378"/>
        <dbReference type="ChEBI" id="CHEBI:30616"/>
        <dbReference type="ChEBI" id="CHEBI:33019"/>
        <dbReference type="ChEBI" id="CHEBI:57498"/>
        <dbReference type="ChEBI" id="CHEBI:58601"/>
        <dbReference type="EC" id="2.7.7.27"/>
    </reaction>
</comment>
<comment type="pathway">
    <text evidence="1">Glycan biosynthesis; glycogen biosynthesis.</text>
</comment>
<comment type="subunit">
    <text evidence="1">Homotetramer.</text>
</comment>
<comment type="similarity">
    <text evidence="1">Belongs to the bacterial/plant glucose-1-phosphate adenylyltransferase family.</text>
</comment>
<feature type="chain" id="PRO_0000195321" description="Glucose-1-phosphate adenylyltransferase">
    <location>
        <begin position="1"/>
        <end position="420"/>
    </location>
</feature>
<feature type="binding site" evidence="1">
    <location>
        <position position="107"/>
    </location>
    <ligand>
        <name>alpha-D-glucose 1-phosphate</name>
        <dbReference type="ChEBI" id="CHEBI:58601"/>
    </ligand>
</feature>
<feature type="binding site" evidence="1">
    <location>
        <position position="172"/>
    </location>
    <ligand>
        <name>alpha-D-glucose 1-phosphate</name>
        <dbReference type="ChEBI" id="CHEBI:58601"/>
    </ligand>
</feature>
<feature type="binding site" evidence="1">
    <location>
        <begin position="187"/>
        <end position="188"/>
    </location>
    <ligand>
        <name>alpha-D-glucose 1-phosphate</name>
        <dbReference type="ChEBI" id="CHEBI:58601"/>
    </ligand>
</feature>
<feature type="binding site" evidence="1">
    <location>
        <position position="205"/>
    </location>
    <ligand>
        <name>alpha-D-glucose 1-phosphate</name>
        <dbReference type="ChEBI" id="CHEBI:58601"/>
    </ligand>
</feature>
<proteinExistence type="inferred from homology"/>
<dbReference type="EC" id="2.7.7.27" evidence="1"/>
<dbReference type="EMBL" id="BX572594">
    <property type="protein sequence ID" value="CAE25825.1"/>
    <property type="molecule type" value="Genomic_DNA"/>
</dbReference>
<dbReference type="RefSeq" id="WP_011155949.1">
    <property type="nucleotide sequence ID" value="NZ_CP116810.1"/>
</dbReference>
<dbReference type="SMR" id="Q6NCT8"/>
<dbReference type="STRING" id="258594.RPA0381"/>
<dbReference type="GeneID" id="66891394"/>
<dbReference type="eggNOG" id="COG0448">
    <property type="taxonomic scope" value="Bacteria"/>
</dbReference>
<dbReference type="HOGENOM" id="CLU_029499_14_1_5"/>
<dbReference type="PhylomeDB" id="Q6NCT8"/>
<dbReference type="UniPathway" id="UPA00164"/>
<dbReference type="GO" id="GO:0005524">
    <property type="term" value="F:ATP binding"/>
    <property type="evidence" value="ECO:0007669"/>
    <property type="project" value="UniProtKB-KW"/>
</dbReference>
<dbReference type="GO" id="GO:0008878">
    <property type="term" value="F:glucose-1-phosphate adenylyltransferase activity"/>
    <property type="evidence" value="ECO:0007669"/>
    <property type="project" value="UniProtKB-UniRule"/>
</dbReference>
<dbReference type="GO" id="GO:0005978">
    <property type="term" value="P:glycogen biosynthetic process"/>
    <property type="evidence" value="ECO:0007669"/>
    <property type="project" value="UniProtKB-UniRule"/>
</dbReference>
<dbReference type="CDD" id="cd02508">
    <property type="entry name" value="ADP_Glucose_PP"/>
    <property type="match status" value="1"/>
</dbReference>
<dbReference type="CDD" id="cd04651">
    <property type="entry name" value="LbH_G1P_AT_C"/>
    <property type="match status" value="1"/>
</dbReference>
<dbReference type="Gene3D" id="2.160.10.10">
    <property type="entry name" value="Hexapeptide repeat proteins"/>
    <property type="match status" value="1"/>
</dbReference>
<dbReference type="Gene3D" id="3.90.550.10">
    <property type="entry name" value="Spore Coat Polysaccharide Biosynthesis Protein SpsA, Chain A"/>
    <property type="match status" value="1"/>
</dbReference>
<dbReference type="HAMAP" id="MF_00624">
    <property type="entry name" value="GlgC"/>
    <property type="match status" value="1"/>
</dbReference>
<dbReference type="InterPro" id="IPR011831">
    <property type="entry name" value="ADP-Glc_PPase"/>
</dbReference>
<dbReference type="InterPro" id="IPR005836">
    <property type="entry name" value="ADP_Glu_pyroP_CS"/>
</dbReference>
<dbReference type="InterPro" id="IPR023049">
    <property type="entry name" value="GlgC_bac"/>
</dbReference>
<dbReference type="InterPro" id="IPR056818">
    <property type="entry name" value="GlmU/GlgC-like_hexapep"/>
</dbReference>
<dbReference type="InterPro" id="IPR005835">
    <property type="entry name" value="NTP_transferase_dom"/>
</dbReference>
<dbReference type="InterPro" id="IPR029044">
    <property type="entry name" value="Nucleotide-diphossugar_trans"/>
</dbReference>
<dbReference type="InterPro" id="IPR011004">
    <property type="entry name" value="Trimer_LpxA-like_sf"/>
</dbReference>
<dbReference type="NCBIfam" id="TIGR02091">
    <property type="entry name" value="glgC"/>
    <property type="match status" value="1"/>
</dbReference>
<dbReference type="NCBIfam" id="NF001947">
    <property type="entry name" value="PRK00725.1"/>
    <property type="match status" value="1"/>
</dbReference>
<dbReference type="NCBIfam" id="NF002023">
    <property type="entry name" value="PRK00844.1"/>
    <property type="match status" value="1"/>
</dbReference>
<dbReference type="PANTHER" id="PTHR43523:SF2">
    <property type="entry name" value="GLUCOSE-1-PHOSPHATE ADENYLYLTRANSFERASE"/>
    <property type="match status" value="1"/>
</dbReference>
<dbReference type="PANTHER" id="PTHR43523">
    <property type="entry name" value="GLUCOSE-1-PHOSPHATE ADENYLYLTRANSFERASE-RELATED"/>
    <property type="match status" value="1"/>
</dbReference>
<dbReference type="Pfam" id="PF24894">
    <property type="entry name" value="Hexapep_GlmU"/>
    <property type="match status" value="1"/>
</dbReference>
<dbReference type="Pfam" id="PF00483">
    <property type="entry name" value="NTP_transferase"/>
    <property type="match status" value="1"/>
</dbReference>
<dbReference type="SUPFAM" id="SSF53448">
    <property type="entry name" value="Nucleotide-diphospho-sugar transferases"/>
    <property type="match status" value="1"/>
</dbReference>
<dbReference type="SUPFAM" id="SSF51161">
    <property type="entry name" value="Trimeric LpxA-like enzymes"/>
    <property type="match status" value="1"/>
</dbReference>
<dbReference type="PROSITE" id="PS00808">
    <property type="entry name" value="ADP_GLC_PYROPHOSPH_1"/>
    <property type="match status" value="1"/>
</dbReference>
<dbReference type="PROSITE" id="PS00809">
    <property type="entry name" value="ADP_GLC_PYROPHOSPH_2"/>
    <property type="match status" value="1"/>
</dbReference>
<dbReference type="PROSITE" id="PS00810">
    <property type="entry name" value="ADP_GLC_PYROPHOSPH_3"/>
    <property type="match status" value="1"/>
</dbReference>
<evidence type="ECO:0000255" key="1">
    <source>
        <dbReference type="HAMAP-Rule" id="MF_00624"/>
    </source>
</evidence>
<sequence>MSQGVTAPFARHAMAYVLAGGRGSRLMELTDWRAKPAVYFGGKSRIIDFALSNALNSGIRRIAVATQYKAHSLIRHLQRGWNFFRPERNESFDILPASQRVSEEMWYRGTADAVFQNIDIIESYDPKFIVLLAGDHVYKMDYEKMLQQHVEQGADVTVGCLEVPRAEATAFGVMHTDTTDRIISFLEKPADPPAMPGKADKSLVSMGIYVFETKFLLDELRRDAADPNSSHDFGKDIIPYIVKHGKAVAHHFDKSCRRSSSEAVSYWRDVGTVDAYWAANIDLTDIVPELDLYDREWPIWTYGEITPPAKFVHDKEGRRGEAVSSLVSGGCIISGASLRHSLLFTGVRVHSFSHVENTVVLPYADIGRSCRLKNVVIDAEVKLPAGLVVGEDPEFDAKRFRRTENGICLITRAMIEKLDA</sequence>